<dbReference type="EMBL" id="S94723">
    <property type="protein sequence ID" value="AAA08526.1"/>
    <property type="molecule type" value="Genomic_DNA"/>
</dbReference>
<dbReference type="EMBL" id="S94709">
    <property type="protein sequence ID" value="AAA08526.1"/>
    <property type="status" value="JOINED"/>
    <property type="molecule type" value="Genomic_DNA"/>
</dbReference>
<dbReference type="EMBL" id="S94714">
    <property type="protein sequence ID" value="AAA08526.1"/>
    <property type="status" value="JOINED"/>
    <property type="molecule type" value="Genomic_DNA"/>
</dbReference>
<dbReference type="EMBL" id="S94717">
    <property type="protein sequence ID" value="AAA08526.1"/>
    <property type="status" value="JOINED"/>
    <property type="molecule type" value="Genomic_DNA"/>
</dbReference>
<dbReference type="EMBL" id="S94719">
    <property type="protein sequence ID" value="AAA08526.1"/>
    <property type="status" value="JOINED"/>
    <property type="molecule type" value="Genomic_DNA"/>
</dbReference>
<dbReference type="EMBL" id="X63729">
    <property type="protein sequence ID" value="CAA45272.1"/>
    <property type="molecule type" value="mRNA"/>
</dbReference>
<dbReference type="EMBL" id="X63728">
    <property type="protein sequence ID" value="CAA45271.1"/>
    <property type="molecule type" value="mRNA"/>
</dbReference>
<dbReference type="EMBL" id="AE001572">
    <property type="protein sequence ID" value="AAD19802.1"/>
    <property type="molecule type" value="Genomic_DNA"/>
</dbReference>
<dbReference type="EMBL" id="AE014297">
    <property type="protein sequence ID" value="AAF54089.3"/>
    <property type="molecule type" value="Genomic_DNA"/>
</dbReference>
<dbReference type="EMBL" id="AE014297">
    <property type="protein sequence ID" value="AAS65118.1"/>
    <property type="molecule type" value="Genomic_DNA"/>
</dbReference>
<dbReference type="EMBL" id="AE014297">
    <property type="protein sequence ID" value="AAS65119.1"/>
    <property type="molecule type" value="Genomic_DNA"/>
</dbReference>
<dbReference type="EMBL" id="AE014297">
    <property type="protein sequence ID" value="AAS65120.1"/>
    <property type="molecule type" value="Genomic_DNA"/>
</dbReference>
<dbReference type="PIR" id="S20881">
    <property type="entry name" value="S20881"/>
</dbReference>
<dbReference type="RefSeq" id="NP_476669.3">
    <molecule id="P31264-1"/>
    <property type="nucleotide sequence ID" value="NM_057321.5"/>
</dbReference>
<dbReference type="RefSeq" id="NP_996161.1">
    <molecule id="P31264-4"/>
    <property type="nucleotide sequence ID" value="NM_206439.2"/>
</dbReference>
<dbReference type="RefSeq" id="NP_996162.1">
    <molecule id="P31264-2"/>
    <property type="nucleotide sequence ID" value="NM_206440.2"/>
</dbReference>
<dbReference type="RefSeq" id="NP_996163.1">
    <molecule id="P31264-3"/>
    <property type="nucleotide sequence ID" value="NM_206441.2"/>
</dbReference>
<dbReference type="SMR" id="P31264"/>
<dbReference type="BioGRID" id="66024">
    <property type="interactions" value="18"/>
</dbReference>
<dbReference type="FunCoup" id="P31264">
    <property type="interactions" value="163"/>
</dbReference>
<dbReference type="IntAct" id="P31264">
    <property type="interactions" value="2"/>
</dbReference>
<dbReference type="STRING" id="7227.FBpp0088333"/>
<dbReference type="PaxDb" id="7227-FBpp0088333"/>
<dbReference type="DNASU" id="40826"/>
<dbReference type="EnsemblMetazoa" id="FBtr0089276">
    <molecule id="P31264-1"/>
    <property type="protein sequence ID" value="FBpp0088333"/>
    <property type="gene ID" value="FBgn0051481"/>
</dbReference>
<dbReference type="EnsemblMetazoa" id="FBtr0089277">
    <molecule id="P31264-3"/>
    <property type="protein sequence ID" value="FBpp0088334"/>
    <property type="gene ID" value="FBgn0051481"/>
</dbReference>
<dbReference type="EnsemblMetazoa" id="FBtr0089278">
    <molecule id="P31264-2"/>
    <property type="protein sequence ID" value="FBpp0088335"/>
    <property type="gene ID" value="FBgn0051481"/>
</dbReference>
<dbReference type="EnsemblMetazoa" id="FBtr0089279">
    <molecule id="P31264-4"/>
    <property type="protein sequence ID" value="FBpp0088336"/>
    <property type="gene ID" value="FBgn0051481"/>
</dbReference>
<dbReference type="GeneID" id="40826"/>
<dbReference type="KEGG" id="dme:Dmel_CG31481"/>
<dbReference type="UCSC" id="CG31481-RA">
    <property type="organism name" value="d. melanogaster"/>
</dbReference>
<dbReference type="AGR" id="FB:FBgn0051481"/>
<dbReference type="CTD" id="40826"/>
<dbReference type="FlyBase" id="FBgn0051481">
    <property type="gene designation" value="pb"/>
</dbReference>
<dbReference type="VEuPathDB" id="VectorBase:FBgn0051481"/>
<dbReference type="eggNOG" id="KOG0489">
    <property type="taxonomic scope" value="Eukaryota"/>
</dbReference>
<dbReference type="GeneTree" id="ENSGT00940000155029"/>
<dbReference type="HOGENOM" id="CLU_359131_0_0_1"/>
<dbReference type="InParanoid" id="P31264"/>
<dbReference type="OMA" id="HEQQFYY"/>
<dbReference type="OrthoDB" id="6159439at2759"/>
<dbReference type="PhylomeDB" id="P31264"/>
<dbReference type="BioGRID-ORCS" id="40826">
    <property type="hits" value="0 hits in 3 CRISPR screens"/>
</dbReference>
<dbReference type="GenomeRNAi" id="40826"/>
<dbReference type="PRO" id="PR:P31264"/>
<dbReference type="Proteomes" id="UP000000803">
    <property type="component" value="Chromosome 3R"/>
</dbReference>
<dbReference type="Bgee" id="FBgn0051481">
    <property type="expression patterns" value="Expressed in labral sense organ mechanosensory neuron in proboscis and 34 other cell types or tissues"/>
</dbReference>
<dbReference type="GO" id="GO:0005634">
    <property type="term" value="C:nucleus"/>
    <property type="evidence" value="ECO:0000314"/>
    <property type="project" value="FlyBase"/>
</dbReference>
<dbReference type="GO" id="GO:0000981">
    <property type="term" value="F:DNA-binding transcription factor activity, RNA polymerase II-specific"/>
    <property type="evidence" value="ECO:0000318"/>
    <property type="project" value="GO_Central"/>
</dbReference>
<dbReference type="GO" id="GO:0000978">
    <property type="term" value="F:RNA polymerase II cis-regulatory region sequence-specific DNA binding"/>
    <property type="evidence" value="ECO:0000318"/>
    <property type="project" value="GO_Central"/>
</dbReference>
<dbReference type="GO" id="GO:0048728">
    <property type="term" value="P:proboscis development"/>
    <property type="evidence" value="ECO:0000315"/>
    <property type="project" value="FlyBase"/>
</dbReference>
<dbReference type="GO" id="GO:0006357">
    <property type="term" value="P:regulation of transcription by RNA polymerase II"/>
    <property type="evidence" value="ECO:0000318"/>
    <property type="project" value="GO_Central"/>
</dbReference>
<dbReference type="GO" id="GO:0007381">
    <property type="term" value="P:specification of segmental identity, labial segment"/>
    <property type="evidence" value="ECO:0000315"/>
    <property type="project" value="FlyBase"/>
</dbReference>
<dbReference type="GO" id="GO:0007382">
    <property type="term" value="P:specification of segmental identity, maxillary segment"/>
    <property type="evidence" value="ECO:0000315"/>
    <property type="project" value="FlyBase"/>
</dbReference>
<dbReference type="CDD" id="cd00086">
    <property type="entry name" value="homeodomain"/>
    <property type="match status" value="1"/>
</dbReference>
<dbReference type="FunFam" id="1.10.10.60:FF:000176">
    <property type="entry name" value="pancreas/duodenum homeobox protein 1"/>
    <property type="match status" value="1"/>
</dbReference>
<dbReference type="Gene3D" id="1.10.10.60">
    <property type="entry name" value="Homeodomain-like"/>
    <property type="match status" value="1"/>
</dbReference>
<dbReference type="InterPro" id="IPR001356">
    <property type="entry name" value="HD"/>
</dbReference>
<dbReference type="InterPro" id="IPR020479">
    <property type="entry name" value="HD_metazoa"/>
</dbReference>
<dbReference type="InterPro" id="IPR001827">
    <property type="entry name" value="Homeobox_Antennapedia_CS"/>
</dbReference>
<dbReference type="InterPro" id="IPR017970">
    <property type="entry name" value="Homeobox_CS"/>
</dbReference>
<dbReference type="InterPro" id="IPR009057">
    <property type="entry name" value="Homeodomain-like_sf"/>
</dbReference>
<dbReference type="PANTHER" id="PTHR45664:SF2">
    <property type="entry name" value="HOMEOTIC PROTEIN PROBOSCIPEDIA"/>
    <property type="match status" value="1"/>
</dbReference>
<dbReference type="PANTHER" id="PTHR45664">
    <property type="entry name" value="PROTEIN ZERKNUELLT 1-RELATED"/>
    <property type="match status" value="1"/>
</dbReference>
<dbReference type="Pfam" id="PF00046">
    <property type="entry name" value="Homeodomain"/>
    <property type="match status" value="1"/>
</dbReference>
<dbReference type="PRINTS" id="PR00024">
    <property type="entry name" value="HOMEOBOX"/>
</dbReference>
<dbReference type="SMART" id="SM00389">
    <property type="entry name" value="HOX"/>
    <property type="match status" value="1"/>
</dbReference>
<dbReference type="SUPFAM" id="SSF46689">
    <property type="entry name" value="Homeodomain-like"/>
    <property type="match status" value="1"/>
</dbReference>
<dbReference type="PROSITE" id="PS00032">
    <property type="entry name" value="ANTENNAPEDIA"/>
    <property type="match status" value="1"/>
</dbReference>
<dbReference type="PROSITE" id="PS00027">
    <property type="entry name" value="HOMEOBOX_1"/>
    <property type="match status" value="1"/>
</dbReference>
<dbReference type="PROSITE" id="PS50071">
    <property type="entry name" value="HOMEOBOX_2"/>
    <property type="match status" value="1"/>
</dbReference>
<comment type="function">
    <text>Sequence-specific transcription factor which is part of a developmental regulatory system that provides cells with specific positional identities on the anterior-posterior axis. Controls development of mouthparts, and labial and maxillary palps.</text>
</comment>
<comment type="subcellular location">
    <subcellularLocation>
        <location>Nucleus</location>
    </subcellularLocation>
</comment>
<comment type="alternative products">
    <event type="alternative splicing"/>
    <isoform>
        <id>P31264-1</id>
        <name>A</name>
        <sequence type="displayed"/>
    </isoform>
    <isoform>
        <id>P31264-2</id>
        <name>C</name>
        <sequence type="described" ref="VSP_002398"/>
    </isoform>
    <isoform>
        <id>P31264-3</id>
        <name>B</name>
        <sequence type="described" ref="VSP_002399"/>
    </isoform>
    <isoform>
        <id>P31264-4</id>
        <name>D</name>
        <sequence type="described" ref="VSP_002400"/>
    </isoform>
    <text>Additional isoforms seem to exist.</text>
</comment>
<comment type="similarity">
    <text evidence="4">Belongs to the Antp homeobox family. Proboscipedia subfamily.</text>
</comment>
<reference key="1">
    <citation type="journal article" date="1992" name="EMBO J.">
        <title>Structural complexity and evolutionary conservation of the Drosophila homeotic gene proboscipedia.</title>
        <authorList>
            <person name="Cribbs D.L."/>
            <person name="Pultz M.A."/>
            <person name="Johnson D."/>
            <person name="Mazzulla M."/>
            <person name="Kaufman T.C."/>
        </authorList>
    </citation>
    <scope>NUCLEOTIDE SEQUENCE [GENOMIC DNA / MRNA] (ISOFORMS A; B; C AND D)</scope>
    <source>
        <strain>Canton-S</strain>
    </source>
</reference>
<reference key="2">
    <citation type="submission" date="1999-01" db="EMBL/GenBank/DDBJ databases">
        <title>Complete sequence of the Antennapedia complex of Drosophila.</title>
        <authorList>
            <person name="Celniker S.E."/>
            <person name="Pfeiffer B.D."/>
            <person name="Knafels J."/>
            <person name="Martin C.H."/>
            <person name="Mayeda C.A."/>
            <person name="Palazzolo M.J."/>
        </authorList>
    </citation>
    <scope>NUCLEOTIDE SEQUENCE [GENOMIC DNA]</scope>
    <source>
        <strain>Berkeley</strain>
    </source>
</reference>
<reference key="3">
    <citation type="journal article" date="2000" name="Science">
        <title>The genome sequence of Drosophila melanogaster.</title>
        <authorList>
            <person name="Adams M.D."/>
            <person name="Celniker S.E."/>
            <person name="Holt R.A."/>
            <person name="Evans C.A."/>
            <person name="Gocayne J.D."/>
            <person name="Amanatides P.G."/>
            <person name="Scherer S.E."/>
            <person name="Li P.W."/>
            <person name="Hoskins R.A."/>
            <person name="Galle R.F."/>
            <person name="George R.A."/>
            <person name="Lewis S.E."/>
            <person name="Richards S."/>
            <person name="Ashburner M."/>
            <person name="Henderson S.N."/>
            <person name="Sutton G.G."/>
            <person name="Wortman J.R."/>
            <person name="Yandell M.D."/>
            <person name="Zhang Q."/>
            <person name="Chen L.X."/>
            <person name="Brandon R.C."/>
            <person name="Rogers Y.-H.C."/>
            <person name="Blazej R.G."/>
            <person name="Champe M."/>
            <person name="Pfeiffer B.D."/>
            <person name="Wan K.H."/>
            <person name="Doyle C."/>
            <person name="Baxter E.G."/>
            <person name="Helt G."/>
            <person name="Nelson C.R."/>
            <person name="Miklos G.L.G."/>
            <person name="Abril J.F."/>
            <person name="Agbayani A."/>
            <person name="An H.-J."/>
            <person name="Andrews-Pfannkoch C."/>
            <person name="Baldwin D."/>
            <person name="Ballew R.M."/>
            <person name="Basu A."/>
            <person name="Baxendale J."/>
            <person name="Bayraktaroglu L."/>
            <person name="Beasley E.M."/>
            <person name="Beeson K.Y."/>
            <person name="Benos P.V."/>
            <person name="Berman B.P."/>
            <person name="Bhandari D."/>
            <person name="Bolshakov S."/>
            <person name="Borkova D."/>
            <person name="Botchan M.R."/>
            <person name="Bouck J."/>
            <person name="Brokstein P."/>
            <person name="Brottier P."/>
            <person name="Burtis K.C."/>
            <person name="Busam D.A."/>
            <person name="Butler H."/>
            <person name="Cadieu E."/>
            <person name="Center A."/>
            <person name="Chandra I."/>
            <person name="Cherry J.M."/>
            <person name="Cawley S."/>
            <person name="Dahlke C."/>
            <person name="Davenport L.B."/>
            <person name="Davies P."/>
            <person name="de Pablos B."/>
            <person name="Delcher A."/>
            <person name="Deng Z."/>
            <person name="Mays A.D."/>
            <person name="Dew I."/>
            <person name="Dietz S.M."/>
            <person name="Dodson K."/>
            <person name="Doup L.E."/>
            <person name="Downes M."/>
            <person name="Dugan-Rocha S."/>
            <person name="Dunkov B.C."/>
            <person name="Dunn P."/>
            <person name="Durbin K.J."/>
            <person name="Evangelista C.C."/>
            <person name="Ferraz C."/>
            <person name="Ferriera S."/>
            <person name="Fleischmann W."/>
            <person name="Fosler C."/>
            <person name="Gabrielian A.E."/>
            <person name="Garg N.S."/>
            <person name="Gelbart W.M."/>
            <person name="Glasser K."/>
            <person name="Glodek A."/>
            <person name="Gong F."/>
            <person name="Gorrell J.H."/>
            <person name="Gu Z."/>
            <person name="Guan P."/>
            <person name="Harris M."/>
            <person name="Harris N.L."/>
            <person name="Harvey D.A."/>
            <person name="Heiman T.J."/>
            <person name="Hernandez J.R."/>
            <person name="Houck J."/>
            <person name="Hostin D."/>
            <person name="Houston K.A."/>
            <person name="Howland T.J."/>
            <person name="Wei M.-H."/>
            <person name="Ibegwam C."/>
            <person name="Jalali M."/>
            <person name="Kalush F."/>
            <person name="Karpen G.H."/>
            <person name="Ke Z."/>
            <person name="Kennison J.A."/>
            <person name="Ketchum K.A."/>
            <person name="Kimmel B.E."/>
            <person name="Kodira C.D."/>
            <person name="Kraft C.L."/>
            <person name="Kravitz S."/>
            <person name="Kulp D."/>
            <person name="Lai Z."/>
            <person name="Lasko P."/>
            <person name="Lei Y."/>
            <person name="Levitsky A.A."/>
            <person name="Li J.H."/>
            <person name="Li Z."/>
            <person name="Liang Y."/>
            <person name="Lin X."/>
            <person name="Liu X."/>
            <person name="Mattei B."/>
            <person name="McIntosh T.C."/>
            <person name="McLeod M.P."/>
            <person name="McPherson D."/>
            <person name="Merkulov G."/>
            <person name="Milshina N.V."/>
            <person name="Mobarry C."/>
            <person name="Morris J."/>
            <person name="Moshrefi A."/>
            <person name="Mount S.M."/>
            <person name="Moy M."/>
            <person name="Murphy B."/>
            <person name="Murphy L."/>
            <person name="Muzny D.M."/>
            <person name="Nelson D.L."/>
            <person name="Nelson D.R."/>
            <person name="Nelson K.A."/>
            <person name="Nixon K."/>
            <person name="Nusskern D.R."/>
            <person name="Pacleb J.M."/>
            <person name="Palazzolo M."/>
            <person name="Pittman G.S."/>
            <person name="Pan S."/>
            <person name="Pollard J."/>
            <person name="Puri V."/>
            <person name="Reese M.G."/>
            <person name="Reinert K."/>
            <person name="Remington K."/>
            <person name="Saunders R.D.C."/>
            <person name="Scheeler F."/>
            <person name="Shen H."/>
            <person name="Shue B.C."/>
            <person name="Siden-Kiamos I."/>
            <person name="Simpson M."/>
            <person name="Skupski M.P."/>
            <person name="Smith T.J."/>
            <person name="Spier E."/>
            <person name="Spradling A.C."/>
            <person name="Stapleton M."/>
            <person name="Strong R."/>
            <person name="Sun E."/>
            <person name="Svirskas R."/>
            <person name="Tector C."/>
            <person name="Turner R."/>
            <person name="Venter E."/>
            <person name="Wang A.H."/>
            <person name="Wang X."/>
            <person name="Wang Z.-Y."/>
            <person name="Wassarman D.A."/>
            <person name="Weinstock G.M."/>
            <person name="Weissenbach J."/>
            <person name="Williams S.M."/>
            <person name="Woodage T."/>
            <person name="Worley K.C."/>
            <person name="Wu D."/>
            <person name="Yang S."/>
            <person name="Yao Q.A."/>
            <person name="Ye J."/>
            <person name="Yeh R.-F."/>
            <person name="Zaveri J.S."/>
            <person name="Zhan M."/>
            <person name="Zhang G."/>
            <person name="Zhao Q."/>
            <person name="Zheng L."/>
            <person name="Zheng X.H."/>
            <person name="Zhong F.N."/>
            <person name="Zhong W."/>
            <person name="Zhou X."/>
            <person name="Zhu S.C."/>
            <person name="Zhu X."/>
            <person name="Smith H.O."/>
            <person name="Gibbs R.A."/>
            <person name="Myers E.W."/>
            <person name="Rubin G.M."/>
            <person name="Venter J.C."/>
        </authorList>
    </citation>
    <scope>NUCLEOTIDE SEQUENCE [LARGE SCALE GENOMIC DNA]</scope>
    <source>
        <strain>Berkeley</strain>
    </source>
</reference>
<reference key="4">
    <citation type="journal article" date="2002" name="Genome Biol.">
        <title>Annotation of the Drosophila melanogaster euchromatic genome: a systematic review.</title>
        <authorList>
            <person name="Misra S."/>
            <person name="Crosby M.A."/>
            <person name="Mungall C.J."/>
            <person name="Matthews B.B."/>
            <person name="Campbell K.S."/>
            <person name="Hradecky P."/>
            <person name="Huang Y."/>
            <person name="Kaminker J.S."/>
            <person name="Millburn G.H."/>
            <person name="Prochnik S.E."/>
            <person name="Smith C.D."/>
            <person name="Tupy J.L."/>
            <person name="Whitfield E.J."/>
            <person name="Bayraktaroglu L."/>
            <person name="Berman B.P."/>
            <person name="Bettencourt B.R."/>
            <person name="Celniker S.E."/>
            <person name="de Grey A.D.N.J."/>
            <person name="Drysdale R.A."/>
            <person name="Harris N.L."/>
            <person name="Richter J."/>
            <person name="Russo S."/>
            <person name="Schroeder A.J."/>
            <person name="Shu S.Q."/>
            <person name="Stapleton M."/>
            <person name="Yamada C."/>
            <person name="Ashburner M."/>
            <person name="Gelbart W.M."/>
            <person name="Rubin G.M."/>
            <person name="Lewis S.E."/>
        </authorList>
    </citation>
    <scope>GENOME REANNOTATION</scope>
    <scope>ALTERNATIVE SPLICING</scope>
    <source>
        <strain>Berkeley</strain>
    </source>
</reference>
<organism>
    <name type="scientific">Drosophila melanogaster</name>
    <name type="common">Fruit fly</name>
    <dbReference type="NCBI Taxonomy" id="7227"/>
    <lineage>
        <taxon>Eukaryota</taxon>
        <taxon>Metazoa</taxon>
        <taxon>Ecdysozoa</taxon>
        <taxon>Arthropoda</taxon>
        <taxon>Hexapoda</taxon>
        <taxon>Insecta</taxon>
        <taxon>Pterygota</taxon>
        <taxon>Neoptera</taxon>
        <taxon>Endopterygota</taxon>
        <taxon>Diptera</taxon>
        <taxon>Brachycera</taxon>
        <taxon>Muscomorpha</taxon>
        <taxon>Ephydroidea</taxon>
        <taxon>Drosophilidae</taxon>
        <taxon>Drosophila</taxon>
        <taxon>Sophophora</taxon>
    </lineage>
</organism>
<name>HMPB_DROME</name>
<accession>P31264</accession>
<accession>O97058</accession>
<accession>Q4JFI5</accession>
<accession>Q9VI44</accession>
<protein>
    <recommendedName>
        <fullName>Homeotic protein proboscipedia</fullName>
    </recommendedName>
</protein>
<keyword id="KW-0025">Alternative splicing</keyword>
<keyword id="KW-0217">Developmental protein</keyword>
<keyword id="KW-0238">DNA-binding</keyword>
<keyword id="KW-0371">Homeobox</keyword>
<keyword id="KW-0539">Nucleus</keyword>
<keyword id="KW-1185">Reference proteome</keyword>
<proteinExistence type="evidence at transcript level"/>
<feature type="chain" id="PRO_0000200263" description="Homeotic protein proboscipedia">
    <location>
        <begin position="1"/>
        <end position="782"/>
    </location>
</feature>
<feature type="DNA-binding region" description="Homeobox" evidence="1">
    <location>
        <begin position="198"/>
        <end position="257"/>
    </location>
</feature>
<feature type="region of interest" description="Disordered" evidence="2">
    <location>
        <begin position="1"/>
        <end position="23"/>
    </location>
</feature>
<feature type="region of interest" description="Disordered" evidence="2">
    <location>
        <begin position="153"/>
        <end position="195"/>
    </location>
</feature>
<feature type="region of interest" description="Disordered" evidence="2">
    <location>
        <begin position="251"/>
        <end position="336"/>
    </location>
</feature>
<feature type="region of interest" description="Disordered" evidence="2">
    <location>
        <begin position="358"/>
        <end position="380"/>
    </location>
</feature>
<feature type="region of interest" description="Disordered" evidence="2">
    <location>
        <begin position="439"/>
        <end position="493"/>
    </location>
</feature>
<feature type="region of interest" description="Disordered" evidence="2">
    <location>
        <begin position="547"/>
        <end position="586"/>
    </location>
</feature>
<feature type="short sequence motif" description="Antp-type hexapeptide">
    <location>
        <begin position="164"/>
        <end position="169"/>
    </location>
</feature>
<feature type="compositionally biased region" description="Low complexity" evidence="2">
    <location>
        <begin position="308"/>
        <end position="321"/>
    </location>
</feature>
<feature type="compositionally biased region" description="Polar residues" evidence="2">
    <location>
        <begin position="322"/>
        <end position="336"/>
    </location>
</feature>
<feature type="compositionally biased region" description="Gly residues" evidence="2">
    <location>
        <begin position="452"/>
        <end position="463"/>
    </location>
</feature>
<feature type="compositionally biased region" description="Low complexity" evidence="2">
    <location>
        <begin position="464"/>
        <end position="493"/>
    </location>
</feature>
<feature type="compositionally biased region" description="Basic residues" evidence="2">
    <location>
        <begin position="563"/>
        <end position="580"/>
    </location>
</feature>
<feature type="splice variant" id="VSP_002400" description="In isoform D." evidence="3">
    <location>
        <begin position="184"/>
        <end position="193"/>
    </location>
</feature>
<feature type="splice variant" id="VSP_002398" description="In isoform C." evidence="3">
    <original>GDNSIT</original>
    <variation>A</variation>
    <location>
        <begin position="184"/>
        <end position="189"/>
    </location>
</feature>
<feature type="splice variant" id="VSP_002399" description="In isoform B." evidence="3">
    <original>TEFVPE</original>
    <variation>K</variation>
    <location>
        <begin position="189"/>
        <end position="194"/>
    </location>
</feature>
<feature type="sequence conflict" description="In Ref. 1; AAA08526/CAA45272/CAA45271." evidence="4" ref="1">
    <original>H</original>
    <variation>D</variation>
    <location>
        <position position="520"/>
    </location>
</feature>
<feature type="sequence conflict" description="In Ref. 1; AAA08526/CAA45272/CAA45271." evidence="4" ref="1">
    <original>Q</original>
    <variation>E</variation>
    <location>
        <position position="651"/>
    </location>
</feature>
<feature type="sequence conflict" description="In Ref. 1; AAA08526/CAA45272/CAA45271." evidence="4" ref="1">
    <original>H</original>
    <variation>D</variation>
    <location>
        <position position="685"/>
    </location>
</feature>
<feature type="sequence conflict" description="In Ref. 1; AAA08526/CAA45272/CAA45271." evidence="4" ref="1">
    <original>P</original>
    <variation>H</variation>
    <location>
        <position position="701"/>
    </location>
</feature>
<feature type="sequence conflict" description="In Ref. 1; AAA08526/CAA45272/CAA45271." evidence="4" ref="1">
    <original>SNLANDFAPEYYQLS</original>
    <variation>ATWPTTLRRNTTNSVSSCRKYARGQCKYLLA</variation>
    <location>
        <begin position="768"/>
        <end position="782"/>
    </location>
</feature>
<gene>
    <name type="primary">pb</name>
    <name type="ORF">CG31481</name>
</gene>
<evidence type="ECO:0000255" key="1">
    <source>
        <dbReference type="PROSITE-ProRule" id="PRU00108"/>
    </source>
</evidence>
<evidence type="ECO:0000256" key="2">
    <source>
        <dbReference type="SAM" id="MobiDB-lite"/>
    </source>
</evidence>
<evidence type="ECO:0000303" key="3">
    <source>
    </source>
</evidence>
<evidence type="ECO:0000305" key="4"/>
<sequence>MQEVCSSLDTTSMGTQIKSESPLNPLQVQTGQTSLPVGGCGGAGVVGGVGGVGVSVGQPGIGQQGVPPVPSVLMVNKMTPNCDKRSADTAYWMTASEGGFINSQPSMAEFLNHLSPESPKIGTPVGSGAIGGVGVNVNVNVGVGVGYPVGVVPQTPDGMDSVPEYPWMKEKKTSRKSSNNNNQGDNSITEFVPENGLPRRLRTAYTNTQLLELEKEFHFNKYLCRPRRIEIAASLDLTERQVKVWFQNRRMKHKRQTLSKTDDEDNKDSLKGDDDQSDSNSNSKKSCQGCELPSDDIPDSTSNSRGHNNNTPSATNNNPSAGNLTPNSSLETGISSNLMGSTTVSASNVISADSSVASSVSLDEDIEESSPIKVKKKDDGQVIKKEAVSTSSKASPFGYENSTPSLVSFRRDSDASAVGNAPTSKAVGKKRFQSAANAIATPTPLSDSNSGNGSGGGPAGGYFPGYYPSPKQQQQVQQQQLHPQQQQLPQQQPQDYYGKYDIEFAASPHHNPHNKQQALHGEYLSPKPSSANFHQNSQQQQQNDHFYYNYNDTNGTPYLNHQQQHHHHAQHHQQQQHHQNHVADFEGPVNGPSNFNNGAYYDNMSFQQQAQAHQHQTVVFQQQQPHQPAAINHQHMHHLGNGETYSALGLQMENCEGYNNFGAAGTGGGYYEAGQQPPIPATHGHGHHPHHVQVPAQAHAPIHAHHNSAAIPGGVGVGPPPSHIHGFAINGGPAVQGQAFGNNGSTAAGTAAISGLENSNSSDFNFLSNLANDFAPEYYQLS</sequence>